<comment type="function">
    <text evidence="1">Topoisomerase IV is essential for chromosome segregation. It relaxes supercoiled DNA. Performs the decatenation events required during the replication of a circular DNA molecule.</text>
</comment>
<comment type="catalytic activity">
    <reaction evidence="1">
        <text>ATP-dependent breakage, passage and rejoining of double-stranded DNA.</text>
        <dbReference type="EC" id="5.6.2.2"/>
    </reaction>
</comment>
<comment type="cofactor">
    <cofactor evidence="1">
        <name>Mg(2+)</name>
        <dbReference type="ChEBI" id="CHEBI:18420"/>
    </cofactor>
    <cofactor evidence="1">
        <name>Mn(2+)</name>
        <dbReference type="ChEBI" id="CHEBI:29035"/>
    </cofactor>
    <cofactor evidence="1">
        <name>Ca(2+)</name>
        <dbReference type="ChEBI" id="CHEBI:29108"/>
    </cofactor>
    <text evidence="1">Binds two Mg(2+) per subunit. The magnesium ions form salt bridges with both the protein and the DNA. Can also accept other divalent metal cations, such as Mn(2+) or Ca(2+).</text>
</comment>
<comment type="subunit">
    <text evidence="1">Heterotetramer composed of ParC and ParE.</text>
</comment>
<comment type="similarity">
    <text evidence="1">Belongs to the type II topoisomerase family. ParE type 2 subfamily.</text>
</comment>
<comment type="sequence caution" evidence="3">
    <conflict type="erroneous initiation">
        <sequence resource="EMBL-CDS" id="AAW54307"/>
    </conflict>
</comment>
<reference key="1">
    <citation type="journal article" date="2005" name="J. Bacteriol.">
        <title>Insights on evolution of virulence and resistance from the complete genome analysis of an early methicillin-resistant Staphylococcus aureus strain and a biofilm-producing methicillin-resistant Staphylococcus epidermidis strain.</title>
        <authorList>
            <person name="Gill S.R."/>
            <person name="Fouts D.E."/>
            <person name="Archer G.L."/>
            <person name="Mongodin E.F."/>
            <person name="DeBoy R.T."/>
            <person name="Ravel J."/>
            <person name="Paulsen I.T."/>
            <person name="Kolonay J.F."/>
            <person name="Brinkac L.M."/>
            <person name="Beanan M.J."/>
            <person name="Dodson R.J."/>
            <person name="Daugherty S.C."/>
            <person name="Madupu R."/>
            <person name="Angiuoli S.V."/>
            <person name="Durkin A.S."/>
            <person name="Haft D.H."/>
            <person name="Vamathevan J.J."/>
            <person name="Khouri H."/>
            <person name="Utterback T.R."/>
            <person name="Lee C."/>
            <person name="Dimitrov G."/>
            <person name="Jiang L."/>
            <person name="Qin H."/>
            <person name="Weidman J."/>
            <person name="Tran K."/>
            <person name="Kang K.H."/>
            <person name="Hance I.R."/>
            <person name="Nelson K.E."/>
            <person name="Fraser C.M."/>
        </authorList>
    </citation>
    <scope>NUCLEOTIDE SEQUENCE [LARGE SCALE GENOMIC DNA]</scope>
    <source>
        <strain>ATCC 35984 / DSM 28319 / BCRC 17069 / CCUG 31568 / BM 3577 / RP62A</strain>
    </source>
</reference>
<accession>Q5HPI6</accession>
<dbReference type="EC" id="5.6.2.2" evidence="1"/>
<dbReference type="EMBL" id="CP000029">
    <property type="protein sequence ID" value="AAW54307.1"/>
    <property type="status" value="ALT_INIT"/>
    <property type="molecule type" value="Genomic_DNA"/>
</dbReference>
<dbReference type="SMR" id="Q5HPI6"/>
<dbReference type="STRING" id="176279.SERP0925"/>
<dbReference type="ChEMBL" id="CHEMBL3706563"/>
<dbReference type="KEGG" id="ser:SERP0925"/>
<dbReference type="eggNOG" id="COG0187">
    <property type="taxonomic scope" value="Bacteria"/>
</dbReference>
<dbReference type="HOGENOM" id="CLU_006146_1_2_9"/>
<dbReference type="Proteomes" id="UP000000531">
    <property type="component" value="Chromosome"/>
</dbReference>
<dbReference type="GO" id="GO:0005694">
    <property type="term" value="C:chromosome"/>
    <property type="evidence" value="ECO:0007669"/>
    <property type="project" value="InterPro"/>
</dbReference>
<dbReference type="GO" id="GO:0005524">
    <property type="term" value="F:ATP binding"/>
    <property type="evidence" value="ECO:0007669"/>
    <property type="project" value="UniProtKB-UniRule"/>
</dbReference>
<dbReference type="GO" id="GO:0003677">
    <property type="term" value="F:DNA binding"/>
    <property type="evidence" value="ECO:0007669"/>
    <property type="project" value="UniProtKB-UniRule"/>
</dbReference>
<dbReference type="GO" id="GO:0034335">
    <property type="term" value="F:DNA negative supercoiling activity"/>
    <property type="evidence" value="ECO:0007669"/>
    <property type="project" value="UniProtKB-ARBA"/>
</dbReference>
<dbReference type="GO" id="GO:0046872">
    <property type="term" value="F:metal ion binding"/>
    <property type="evidence" value="ECO:0007669"/>
    <property type="project" value="UniProtKB-KW"/>
</dbReference>
<dbReference type="GO" id="GO:0007059">
    <property type="term" value="P:chromosome segregation"/>
    <property type="evidence" value="ECO:0007669"/>
    <property type="project" value="UniProtKB-UniRule"/>
</dbReference>
<dbReference type="GO" id="GO:0006265">
    <property type="term" value="P:DNA topological change"/>
    <property type="evidence" value="ECO:0007669"/>
    <property type="project" value="UniProtKB-UniRule"/>
</dbReference>
<dbReference type="CDD" id="cd16928">
    <property type="entry name" value="HATPase_GyrB-like"/>
    <property type="match status" value="1"/>
</dbReference>
<dbReference type="CDD" id="cd00822">
    <property type="entry name" value="TopoII_Trans_DNA_gyrase"/>
    <property type="match status" value="1"/>
</dbReference>
<dbReference type="FunFam" id="3.30.230.10:FF:000005">
    <property type="entry name" value="DNA gyrase subunit B"/>
    <property type="match status" value="1"/>
</dbReference>
<dbReference type="FunFam" id="3.30.565.10:FF:000002">
    <property type="entry name" value="DNA gyrase subunit B"/>
    <property type="match status" value="1"/>
</dbReference>
<dbReference type="FunFam" id="3.40.50.670:FF:000002">
    <property type="entry name" value="DNA gyrase subunit B"/>
    <property type="match status" value="1"/>
</dbReference>
<dbReference type="Gene3D" id="3.30.230.10">
    <property type="match status" value="1"/>
</dbReference>
<dbReference type="Gene3D" id="3.40.50.670">
    <property type="match status" value="1"/>
</dbReference>
<dbReference type="Gene3D" id="3.30.565.10">
    <property type="entry name" value="Histidine kinase-like ATPase, C-terminal domain"/>
    <property type="match status" value="1"/>
</dbReference>
<dbReference type="HAMAP" id="MF_00939">
    <property type="entry name" value="ParE_type2"/>
    <property type="match status" value="1"/>
</dbReference>
<dbReference type="InterPro" id="IPR002288">
    <property type="entry name" value="DNA_gyrase_B_C"/>
</dbReference>
<dbReference type="InterPro" id="IPR036890">
    <property type="entry name" value="HATPase_C_sf"/>
</dbReference>
<dbReference type="InterPro" id="IPR005740">
    <property type="entry name" value="ParE_type2"/>
</dbReference>
<dbReference type="InterPro" id="IPR020568">
    <property type="entry name" value="Ribosomal_Su5_D2-typ_SF"/>
</dbReference>
<dbReference type="InterPro" id="IPR014721">
    <property type="entry name" value="Ribsml_uS5_D2-typ_fold_subgr"/>
</dbReference>
<dbReference type="InterPro" id="IPR001241">
    <property type="entry name" value="Topo_IIA"/>
</dbReference>
<dbReference type="InterPro" id="IPR013760">
    <property type="entry name" value="Topo_IIA-like_dom_sf"/>
</dbReference>
<dbReference type="InterPro" id="IPR000565">
    <property type="entry name" value="Topo_IIA_B"/>
</dbReference>
<dbReference type="InterPro" id="IPR013759">
    <property type="entry name" value="Topo_IIA_B_C"/>
</dbReference>
<dbReference type="InterPro" id="IPR013506">
    <property type="entry name" value="Topo_IIA_bsu_dom2"/>
</dbReference>
<dbReference type="InterPro" id="IPR018522">
    <property type="entry name" value="TopoIIA_CS"/>
</dbReference>
<dbReference type="InterPro" id="IPR006171">
    <property type="entry name" value="TOPRIM_dom"/>
</dbReference>
<dbReference type="NCBIfam" id="TIGR01058">
    <property type="entry name" value="parE_Gpos"/>
    <property type="match status" value="1"/>
</dbReference>
<dbReference type="NCBIfam" id="NF004189">
    <property type="entry name" value="PRK05644.1"/>
    <property type="match status" value="1"/>
</dbReference>
<dbReference type="PANTHER" id="PTHR45866">
    <property type="entry name" value="DNA GYRASE/TOPOISOMERASE SUBUNIT B"/>
    <property type="match status" value="1"/>
</dbReference>
<dbReference type="PANTHER" id="PTHR45866:SF12">
    <property type="entry name" value="DNA TOPOISOMERASE 4 SUBUNIT B"/>
    <property type="match status" value="1"/>
</dbReference>
<dbReference type="Pfam" id="PF00204">
    <property type="entry name" value="DNA_gyraseB"/>
    <property type="match status" value="1"/>
</dbReference>
<dbReference type="Pfam" id="PF00986">
    <property type="entry name" value="DNA_gyraseB_C"/>
    <property type="match status" value="1"/>
</dbReference>
<dbReference type="Pfam" id="PF02518">
    <property type="entry name" value="HATPase_c"/>
    <property type="match status" value="1"/>
</dbReference>
<dbReference type="Pfam" id="PF01751">
    <property type="entry name" value="Toprim"/>
    <property type="match status" value="1"/>
</dbReference>
<dbReference type="PRINTS" id="PR01159">
    <property type="entry name" value="DNAGYRASEB"/>
</dbReference>
<dbReference type="PRINTS" id="PR00418">
    <property type="entry name" value="TPI2FAMILY"/>
</dbReference>
<dbReference type="SMART" id="SM00387">
    <property type="entry name" value="HATPase_c"/>
    <property type="match status" value="1"/>
</dbReference>
<dbReference type="SMART" id="SM00433">
    <property type="entry name" value="TOP2c"/>
    <property type="match status" value="1"/>
</dbReference>
<dbReference type="SUPFAM" id="SSF55874">
    <property type="entry name" value="ATPase domain of HSP90 chaperone/DNA topoisomerase II/histidine kinase"/>
    <property type="match status" value="1"/>
</dbReference>
<dbReference type="SUPFAM" id="SSF54211">
    <property type="entry name" value="Ribosomal protein S5 domain 2-like"/>
    <property type="match status" value="1"/>
</dbReference>
<dbReference type="SUPFAM" id="SSF56719">
    <property type="entry name" value="Type II DNA topoisomerase"/>
    <property type="match status" value="1"/>
</dbReference>
<dbReference type="PROSITE" id="PS00177">
    <property type="entry name" value="TOPOISOMERASE_II"/>
    <property type="match status" value="1"/>
</dbReference>
<dbReference type="PROSITE" id="PS50880">
    <property type="entry name" value="TOPRIM"/>
    <property type="match status" value="1"/>
</dbReference>
<proteinExistence type="inferred from homology"/>
<feature type="chain" id="PRO_0000145442" description="DNA topoisomerase 4 subunit B">
    <location>
        <begin position="1"/>
        <end position="664"/>
    </location>
</feature>
<feature type="domain" description="Toprim" evidence="1">
    <location>
        <begin position="424"/>
        <end position="538"/>
    </location>
</feature>
<feature type="region of interest" description="Disordered" evidence="2">
    <location>
        <begin position="386"/>
        <end position="418"/>
    </location>
</feature>
<feature type="compositionally biased region" description="Basic and acidic residues" evidence="2">
    <location>
        <begin position="387"/>
        <end position="398"/>
    </location>
</feature>
<feature type="binding site" evidence="1">
    <location>
        <position position="7"/>
    </location>
    <ligand>
        <name>ATP</name>
        <dbReference type="ChEBI" id="CHEBI:30616"/>
    </ligand>
</feature>
<feature type="binding site" evidence="1">
    <location>
        <position position="47"/>
    </location>
    <ligand>
        <name>ATP</name>
        <dbReference type="ChEBI" id="CHEBI:30616"/>
    </ligand>
</feature>
<feature type="binding site" evidence="1">
    <location>
        <position position="74"/>
    </location>
    <ligand>
        <name>ATP</name>
        <dbReference type="ChEBI" id="CHEBI:30616"/>
    </ligand>
</feature>
<feature type="binding site" evidence="1">
    <location>
        <begin position="114"/>
        <end position="120"/>
    </location>
    <ligand>
        <name>ATP</name>
        <dbReference type="ChEBI" id="CHEBI:30616"/>
    </ligand>
</feature>
<feature type="binding site" evidence="1">
    <location>
        <position position="341"/>
    </location>
    <ligand>
        <name>ATP</name>
        <dbReference type="ChEBI" id="CHEBI:30616"/>
    </ligand>
</feature>
<feature type="binding site" evidence="1">
    <location>
        <position position="430"/>
    </location>
    <ligand>
        <name>Mg(2+)</name>
        <dbReference type="ChEBI" id="CHEBI:18420"/>
        <label>1</label>
        <note>catalytic</note>
    </ligand>
</feature>
<feature type="binding site" evidence="1">
    <location>
        <position position="503"/>
    </location>
    <ligand>
        <name>Mg(2+)</name>
        <dbReference type="ChEBI" id="CHEBI:18420"/>
        <label>1</label>
        <note>catalytic</note>
    </ligand>
</feature>
<feature type="binding site" evidence="1">
    <location>
        <position position="503"/>
    </location>
    <ligand>
        <name>Mg(2+)</name>
        <dbReference type="ChEBI" id="CHEBI:18420"/>
        <label>2</label>
    </ligand>
</feature>
<feature type="binding site" evidence="1">
    <location>
        <position position="505"/>
    </location>
    <ligand>
        <name>Mg(2+)</name>
        <dbReference type="ChEBI" id="CHEBI:18420"/>
        <label>2</label>
    </ligand>
</feature>
<feature type="site" description="Interaction with DNA" evidence="1">
    <location>
        <position position="455"/>
    </location>
</feature>
<feature type="site" description="Interaction with DNA" evidence="1">
    <location>
        <position position="458"/>
    </location>
</feature>
<feature type="site" description="Interaction with DNA" evidence="1">
    <location>
        <position position="510"/>
    </location>
</feature>
<feature type="site" description="Interaction with DNA" evidence="1">
    <location>
        <position position="626"/>
    </location>
</feature>
<name>PARE_STAEQ</name>
<keyword id="KW-0067">ATP-binding</keyword>
<keyword id="KW-0238">DNA-binding</keyword>
<keyword id="KW-0413">Isomerase</keyword>
<keyword id="KW-0460">Magnesium</keyword>
<keyword id="KW-0479">Metal-binding</keyword>
<keyword id="KW-0547">Nucleotide-binding</keyword>
<keyword id="KW-1185">Reference proteome</keyword>
<keyword id="KW-0799">Topoisomerase</keyword>
<protein>
    <recommendedName>
        <fullName evidence="1">DNA topoisomerase 4 subunit B</fullName>
        <ecNumber evidence="1">5.6.2.2</ecNumber>
    </recommendedName>
    <alternativeName>
        <fullName evidence="1">Topoisomerase IV subunit B</fullName>
    </alternativeName>
</protein>
<evidence type="ECO:0000255" key="1">
    <source>
        <dbReference type="HAMAP-Rule" id="MF_00939"/>
    </source>
</evidence>
<evidence type="ECO:0000256" key="2">
    <source>
        <dbReference type="SAM" id="MobiDB-lite"/>
    </source>
</evidence>
<evidence type="ECO:0000305" key="3"/>
<sequence length="664" mass="74470">MNKQNNYSDDSIQVLEGLEAVRKRPGMYIGSTDKRGLHHLVYEVVDNSVDEVLNGYGDAITVTINQDGSISIEDNGRGMPTGIHASGKPTAEVIFTVLHAGGKFGQGGYKTSGGLHGVGASVVNALSEWLEVEIHRDGNIYTQNFKNGGIPATGLVKTGKTKKTGTKVTFKPDSEIFKSTTTFNFDILSERLQESAFLLKDLKITLTDLRSGKEREEIYHYEEGIKEFVSYVNEGKEVLHDVTTFAGHSNGIEVDVAFQYNDQYSESILSFVNNVRTKDGGTHEVGFKTAMTRVFNEYARRINELKDKDKNLDGNDIREGLTAIISVRIPEELLQFEGQTKSKLGTSEARSAVDSVVSEKLPYYLEEKGQLSKSLVKKAIKAQQAREAARKAREDARSGKKNKRKDTLLSGKLTPAQSKNTDKNELYLVEGDSAGGSAKLGRDRKFQAILPLRGKVINTEKARLEDIFKNEEINTIIHTIGAGVGTDFKIEDSNYNRIIIMTDADTDGAHIQVLLLTFFFKYMKPLVQAGRVFIALPPLYKLEKGKGKNKKVEYAWTDEELENLQKQLGKGFILQRYKGLGEMNPEQLWETTMNPETRTLIRVQVEDEVRSSKRVTTLMGDKVAPRREWIEKHVEFGMQEDQSILDNKEVQILENEKYIEEETN</sequence>
<organism>
    <name type="scientific">Staphylococcus epidermidis (strain ATCC 35984 / DSM 28319 / BCRC 17069 / CCUG 31568 / BM 3577 / RP62A)</name>
    <dbReference type="NCBI Taxonomy" id="176279"/>
    <lineage>
        <taxon>Bacteria</taxon>
        <taxon>Bacillati</taxon>
        <taxon>Bacillota</taxon>
        <taxon>Bacilli</taxon>
        <taxon>Bacillales</taxon>
        <taxon>Staphylococcaceae</taxon>
        <taxon>Staphylococcus</taxon>
    </lineage>
</organism>
<gene>
    <name evidence="1" type="primary">parE</name>
    <name type="ordered locus">SERP0925</name>
</gene>